<reference key="1">
    <citation type="submission" date="2004-07" db="EMBL/GenBank/DDBJ databases">
        <title>The cloning and functional analysis of MESrg.</title>
        <authorList>
            <person name="Nie Z."/>
            <person name="Du J."/>
            <person name="Lu G."/>
        </authorList>
    </citation>
    <scope>NUCLEOTIDE SEQUENCE [MRNA] (ISOFORM 1)</scope>
</reference>
<reference key="2">
    <citation type="journal article" date="2005" name="Science">
        <title>The transcriptional landscape of the mammalian genome.</title>
        <authorList>
            <person name="Carninci P."/>
            <person name="Kasukawa T."/>
            <person name="Katayama S."/>
            <person name="Gough J."/>
            <person name="Frith M.C."/>
            <person name="Maeda N."/>
            <person name="Oyama R."/>
            <person name="Ravasi T."/>
            <person name="Lenhard B."/>
            <person name="Wells C."/>
            <person name="Kodzius R."/>
            <person name="Shimokawa K."/>
            <person name="Bajic V.B."/>
            <person name="Brenner S.E."/>
            <person name="Batalov S."/>
            <person name="Forrest A.R."/>
            <person name="Zavolan M."/>
            <person name="Davis M.J."/>
            <person name="Wilming L.G."/>
            <person name="Aidinis V."/>
            <person name="Allen J.E."/>
            <person name="Ambesi-Impiombato A."/>
            <person name="Apweiler R."/>
            <person name="Aturaliya R.N."/>
            <person name="Bailey T.L."/>
            <person name="Bansal M."/>
            <person name="Baxter L."/>
            <person name="Beisel K.W."/>
            <person name="Bersano T."/>
            <person name="Bono H."/>
            <person name="Chalk A.M."/>
            <person name="Chiu K.P."/>
            <person name="Choudhary V."/>
            <person name="Christoffels A."/>
            <person name="Clutterbuck D.R."/>
            <person name="Crowe M.L."/>
            <person name="Dalla E."/>
            <person name="Dalrymple B.P."/>
            <person name="de Bono B."/>
            <person name="Della Gatta G."/>
            <person name="di Bernardo D."/>
            <person name="Down T."/>
            <person name="Engstrom P."/>
            <person name="Fagiolini M."/>
            <person name="Faulkner G."/>
            <person name="Fletcher C.F."/>
            <person name="Fukushima T."/>
            <person name="Furuno M."/>
            <person name="Futaki S."/>
            <person name="Gariboldi M."/>
            <person name="Georgii-Hemming P."/>
            <person name="Gingeras T.R."/>
            <person name="Gojobori T."/>
            <person name="Green R.E."/>
            <person name="Gustincich S."/>
            <person name="Harbers M."/>
            <person name="Hayashi Y."/>
            <person name="Hensch T.K."/>
            <person name="Hirokawa N."/>
            <person name="Hill D."/>
            <person name="Huminiecki L."/>
            <person name="Iacono M."/>
            <person name="Ikeo K."/>
            <person name="Iwama A."/>
            <person name="Ishikawa T."/>
            <person name="Jakt M."/>
            <person name="Kanapin A."/>
            <person name="Katoh M."/>
            <person name="Kawasawa Y."/>
            <person name="Kelso J."/>
            <person name="Kitamura H."/>
            <person name="Kitano H."/>
            <person name="Kollias G."/>
            <person name="Krishnan S.P."/>
            <person name="Kruger A."/>
            <person name="Kummerfeld S.K."/>
            <person name="Kurochkin I.V."/>
            <person name="Lareau L.F."/>
            <person name="Lazarevic D."/>
            <person name="Lipovich L."/>
            <person name="Liu J."/>
            <person name="Liuni S."/>
            <person name="McWilliam S."/>
            <person name="Madan Babu M."/>
            <person name="Madera M."/>
            <person name="Marchionni L."/>
            <person name="Matsuda H."/>
            <person name="Matsuzawa S."/>
            <person name="Miki H."/>
            <person name="Mignone F."/>
            <person name="Miyake S."/>
            <person name="Morris K."/>
            <person name="Mottagui-Tabar S."/>
            <person name="Mulder N."/>
            <person name="Nakano N."/>
            <person name="Nakauchi H."/>
            <person name="Ng P."/>
            <person name="Nilsson R."/>
            <person name="Nishiguchi S."/>
            <person name="Nishikawa S."/>
            <person name="Nori F."/>
            <person name="Ohara O."/>
            <person name="Okazaki Y."/>
            <person name="Orlando V."/>
            <person name="Pang K.C."/>
            <person name="Pavan W.J."/>
            <person name="Pavesi G."/>
            <person name="Pesole G."/>
            <person name="Petrovsky N."/>
            <person name="Piazza S."/>
            <person name="Reed J."/>
            <person name="Reid J.F."/>
            <person name="Ring B.Z."/>
            <person name="Ringwald M."/>
            <person name="Rost B."/>
            <person name="Ruan Y."/>
            <person name="Salzberg S.L."/>
            <person name="Sandelin A."/>
            <person name="Schneider C."/>
            <person name="Schoenbach C."/>
            <person name="Sekiguchi K."/>
            <person name="Semple C.A."/>
            <person name="Seno S."/>
            <person name="Sessa L."/>
            <person name="Sheng Y."/>
            <person name="Shibata Y."/>
            <person name="Shimada H."/>
            <person name="Shimada K."/>
            <person name="Silva D."/>
            <person name="Sinclair B."/>
            <person name="Sperling S."/>
            <person name="Stupka E."/>
            <person name="Sugiura K."/>
            <person name="Sultana R."/>
            <person name="Takenaka Y."/>
            <person name="Taki K."/>
            <person name="Tammoja K."/>
            <person name="Tan S.L."/>
            <person name="Tang S."/>
            <person name="Taylor M.S."/>
            <person name="Tegner J."/>
            <person name="Teichmann S.A."/>
            <person name="Ueda H.R."/>
            <person name="van Nimwegen E."/>
            <person name="Verardo R."/>
            <person name="Wei C.L."/>
            <person name="Yagi K."/>
            <person name="Yamanishi H."/>
            <person name="Zabarovsky E."/>
            <person name="Zhu S."/>
            <person name="Zimmer A."/>
            <person name="Hide W."/>
            <person name="Bult C."/>
            <person name="Grimmond S.M."/>
            <person name="Teasdale R.D."/>
            <person name="Liu E.T."/>
            <person name="Brusic V."/>
            <person name="Quackenbush J."/>
            <person name="Wahlestedt C."/>
            <person name="Mattick J.S."/>
            <person name="Hume D.A."/>
            <person name="Kai C."/>
            <person name="Sasaki D."/>
            <person name="Tomaru Y."/>
            <person name="Fukuda S."/>
            <person name="Kanamori-Katayama M."/>
            <person name="Suzuki M."/>
            <person name="Aoki J."/>
            <person name="Arakawa T."/>
            <person name="Iida J."/>
            <person name="Imamura K."/>
            <person name="Itoh M."/>
            <person name="Kato T."/>
            <person name="Kawaji H."/>
            <person name="Kawagashira N."/>
            <person name="Kawashima T."/>
            <person name="Kojima M."/>
            <person name="Kondo S."/>
            <person name="Konno H."/>
            <person name="Nakano K."/>
            <person name="Ninomiya N."/>
            <person name="Nishio T."/>
            <person name="Okada M."/>
            <person name="Plessy C."/>
            <person name="Shibata K."/>
            <person name="Shiraki T."/>
            <person name="Suzuki S."/>
            <person name="Tagami M."/>
            <person name="Waki K."/>
            <person name="Watahiki A."/>
            <person name="Okamura-Oho Y."/>
            <person name="Suzuki H."/>
            <person name="Kawai J."/>
            <person name="Hayashizaki Y."/>
        </authorList>
    </citation>
    <scope>NUCLEOTIDE SEQUENCE [LARGE SCALE MRNA] (ISOFORMS 1 AND 2)</scope>
    <source>
        <strain>C57BL/6J</strain>
        <tissue>Head</tissue>
        <tissue>Liver</tissue>
        <tissue>Testis</tissue>
        <tissue>Wolffian duct</tissue>
    </source>
</reference>
<reference key="3">
    <citation type="journal article" date="2009" name="PLoS Biol.">
        <title>Lineage-specific biology revealed by a finished genome assembly of the mouse.</title>
        <authorList>
            <person name="Church D.M."/>
            <person name="Goodstadt L."/>
            <person name="Hillier L.W."/>
            <person name="Zody M.C."/>
            <person name="Goldstein S."/>
            <person name="She X."/>
            <person name="Bult C.J."/>
            <person name="Agarwala R."/>
            <person name="Cherry J.L."/>
            <person name="DiCuccio M."/>
            <person name="Hlavina W."/>
            <person name="Kapustin Y."/>
            <person name="Meric P."/>
            <person name="Maglott D."/>
            <person name="Birtle Z."/>
            <person name="Marques A.C."/>
            <person name="Graves T."/>
            <person name="Zhou S."/>
            <person name="Teague B."/>
            <person name="Potamousis K."/>
            <person name="Churas C."/>
            <person name="Place M."/>
            <person name="Herschleb J."/>
            <person name="Runnheim R."/>
            <person name="Forrest D."/>
            <person name="Amos-Landgraf J."/>
            <person name="Schwartz D.C."/>
            <person name="Cheng Z."/>
            <person name="Lindblad-Toh K."/>
            <person name="Eichler E.E."/>
            <person name="Ponting C.P."/>
        </authorList>
    </citation>
    <scope>NUCLEOTIDE SEQUENCE [LARGE SCALE GENOMIC DNA]</scope>
    <source>
        <strain>C57BL/6J</strain>
    </source>
</reference>
<reference key="4">
    <citation type="journal article" date="2004" name="Genome Res.">
        <title>The status, quality, and expansion of the NIH full-length cDNA project: the Mammalian Gene Collection (MGC).</title>
        <authorList>
            <consortium name="The MGC Project Team"/>
        </authorList>
    </citation>
    <scope>NUCLEOTIDE SEQUENCE [LARGE SCALE MRNA] (ISOFORM 3)</scope>
    <source>
        <strain>C57BL/6J</strain>
        <tissue>Brain</tissue>
    </source>
</reference>
<reference key="5">
    <citation type="journal article" date="2010" name="Cell">
        <title>A tissue-specific atlas of mouse protein phosphorylation and expression.</title>
        <authorList>
            <person name="Huttlin E.L."/>
            <person name="Jedrychowski M.P."/>
            <person name="Elias J.E."/>
            <person name="Goswami T."/>
            <person name="Rad R."/>
            <person name="Beausoleil S.A."/>
            <person name="Villen J."/>
            <person name="Haas W."/>
            <person name="Sowa M.E."/>
            <person name="Gygi S.P."/>
        </authorList>
    </citation>
    <scope>PHOSPHORYLATION [LARGE SCALE ANALYSIS] AT THR-106; SER-175 AND SER-228</scope>
    <scope>IDENTIFICATION BY MASS SPECTROMETRY [LARGE SCALE ANALYSIS]</scope>
    <source>
        <tissue>Lung</tissue>
        <tissue>Spleen</tissue>
        <tissue>Testis</tissue>
    </source>
</reference>
<reference key="6">
    <citation type="journal article" date="2014" name="Nature">
        <title>Citrullination regulates pluripotency and histone H1 binding to chromatin.</title>
        <authorList>
            <person name="Christophorou M.A."/>
            <person name="Castelo-Branco G."/>
            <person name="Halley-Stott R.P."/>
            <person name="Oliveira C.S."/>
            <person name="Loos R."/>
            <person name="Radzisheuskaya A."/>
            <person name="Mowen K.A."/>
            <person name="Bertone P."/>
            <person name="Silva J.C."/>
            <person name="Zernicka-Goetz M."/>
            <person name="Nielsen M.L."/>
            <person name="Gurdon J.B."/>
            <person name="Kouzarides T."/>
        </authorList>
    </citation>
    <scope>CITRULLINATION AT ARG-91</scope>
</reference>
<protein>
    <recommendedName>
        <fullName>Borealin</fullName>
    </recommendedName>
    <alternativeName>
        <fullName>Cell division cycle-associated protein 8</fullName>
    </alternativeName>
    <alternativeName>
        <fullName>MESrg</fullName>
    </alternativeName>
</protein>
<sequence length="289" mass="32214">MAPKKRSSRGTRTNTLRSRKLASFLKDFDREVQVRTKQIESDRQTLLKEVENLYNIEILRLPKALQGMKWLDYFALGGNKQALEEAAKADRDITEINNLTAEAIQTPLKSVKKRKVIEVEESIKEEEEEEEEGGGGGGRTKKSHKNLRSAKVKRCLPSKKRTQSIQGRGRSKRLSHDFVTPAMSRLEPSLVKPTPGMTPRFDSRVFKTPGLRTPAAKEQVYNISINGSPLADSKEISLSVPIGGGASLRLLASDLQRIDIAQLNPEALGNIRKLSSRLAQICSSIRTGR</sequence>
<proteinExistence type="evidence at protein level"/>
<dbReference type="EMBL" id="AY550907">
    <property type="protein sequence ID" value="AAT34966.1"/>
    <property type="molecule type" value="mRNA"/>
</dbReference>
<dbReference type="EMBL" id="AK003755">
    <property type="protein sequence ID" value="BAB22980.1"/>
    <property type="molecule type" value="mRNA"/>
</dbReference>
<dbReference type="EMBL" id="AK010905">
    <property type="protein sequence ID" value="BAB27258.1"/>
    <property type="molecule type" value="mRNA"/>
</dbReference>
<dbReference type="EMBL" id="AK020070">
    <property type="protein sequence ID" value="BAB31983.3"/>
    <property type="molecule type" value="mRNA"/>
</dbReference>
<dbReference type="EMBL" id="AK076065">
    <property type="protein sequence ID" value="BAC36158.1"/>
    <property type="molecule type" value="mRNA"/>
</dbReference>
<dbReference type="EMBL" id="AK076422">
    <property type="protein sequence ID" value="BAC36334.1"/>
    <property type="molecule type" value="mRNA"/>
</dbReference>
<dbReference type="EMBL" id="AK077717">
    <property type="protein sequence ID" value="BAC36977.1"/>
    <property type="molecule type" value="mRNA"/>
</dbReference>
<dbReference type="EMBL" id="AK077920">
    <property type="protein sequence ID" value="BAC37063.1"/>
    <property type="molecule type" value="mRNA"/>
</dbReference>
<dbReference type="EMBL" id="AK078404">
    <property type="protein sequence ID" value="BAC37258.1"/>
    <property type="molecule type" value="mRNA"/>
</dbReference>
<dbReference type="EMBL" id="AK082800">
    <property type="protein sequence ID" value="BAC38627.1"/>
    <property type="molecule type" value="mRNA"/>
</dbReference>
<dbReference type="EMBL" id="AL606933">
    <property type="status" value="NOT_ANNOTATED_CDS"/>
    <property type="molecule type" value="Genomic_DNA"/>
</dbReference>
<dbReference type="EMBL" id="BC068181">
    <property type="protein sequence ID" value="AAH68181.1"/>
    <property type="molecule type" value="mRNA"/>
</dbReference>
<dbReference type="CCDS" id="CCDS18631.1">
    <molecule id="Q8BHX3-1"/>
</dbReference>
<dbReference type="RefSeq" id="NP_080836.3">
    <molecule id="Q8BHX3-1"/>
    <property type="nucleotide sequence ID" value="NM_026560.4"/>
</dbReference>
<dbReference type="SMR" id="Q8BHX3"/>
<dbReference type="BioGRID" id="206490">
    <property type="interactions" value="22"/>
</dbReference>
<dbReference type="ComplexPortal" id="CPX-119">
    <property type="entry name" value="Chromosomal passenger complex"/>
</dbReference>
<dbReference type="FunCoup" id="Q8BHX3">
    <property type="interactions" value="1183"/>
</dbReference>
<dbReference type="IntAct" id="Q8BHX3">
    <property type="interactions" value="23"/>
</dbReference>
<dbReference type="STRING" id="10090.ENSMUSP00000081319"/>
<dbReference type="GlyGen" id="Q8BHX3">
    <property type="glycosylation" value="1 site"/>
</dbReference>
<dbReference type="iPTMnet" id="Q8BHX3"/>
<dbReference type="PhosphoSitePlus" id="Q8BHX3"/>
<dbReference type="jPOST" id="Q8BHX3"/>
<dbReference type="PaxDb" id="10090-ENSMUSP00000081319"/>
<dbReference type="PeptideAtlas" id="Q8BHX3"/>
<dbReference type="ProteomicsDB" id="265222">
    <molecule id="Q8BHX3-1"/>
</dbReference>
<dbReference type="ProteomicsDB" id="265223">
    <molecule id="Q8BHX3-2"/>
</dbReference>
<dbReference type="ProteomicsDB" id="265224">
    <molecule id="Q8BHX3-3"/>
</dbReference>
<dbReference type="Pumba" id="Q8BHX3"/>
<dbReference type="Antibodypedia" id="31756">
    <property type="antibodies" value="486 antibodies from 34 providers"/>
</dbReference>
<dbReference type="DNASU" id="52276"/>
<dbReference type="Ensembl" id="ENSMUST00000030690.12">
    <molecule id="Q8BHX3-2"/>
    <property type="protein sequence ID" value="ENSMUSP00000030690.6"/>
    <property type="gene ID" value="ENSMUSG00000028873.17"/>
</dbReference>
<dbReference type="Ensembl" id="ENSMUST00000084296.10">
    <molecule id="Q8BHX3-1"/>
    <property type="protein sequence ID" value="ENSMUSP00000081319.4"/>
    <property type="gene ID" value="ENSMUSG00000028873.17"/>
</dbReference>
<dbReference type="GeneID" id="52276"/>
<dbReference type="KEGG" id="mmu:52276"/>
<dbReference type="UCSC" id="uc008urj.2">
    <molecule id="Q8BHX3-1"/>
    <property type="organism name" value="mouse"/>
</dbReference>
<dbReference type="UCSC" id="uc008urk.2">
    <molecule id="Q8BHX3-3"/>
    <property type="organism name" value="mouse"/>
</dbReference>
<dbReference type="AGR" id="MGI:1196274"/>
<dbReference type="CTD" id="55143"/>
<dbReference type="MGI" id="MGI:1196274">
    <property type="gene designation" value="Cdca8"/>
</dbReference>
<dbReference type="VEuPathDB" id="HostDB:ENSMUSG00000028873"/>
<dbReference type="eggNOG" id="ENOG502QS4S">
    <property type="taxonomic scope" value="Eukaryota"/>
</dbReference>
<dbReference type="GeneTree" id="ENSGT00390000011115"/>
<dbReference type="HOGENOM" id="CLU_074128_0_0_1"/>
<dbReference type="InParanoid" id="Q8BHX3"/>
<dbReference type="OMA" id="DMNWLEY"/>
<dbReference type="OrthoDB" id="37755at9989"/>
<dbReference type="PhylomeDB" id="Q8BHX3"/>
<dbReference type="TreeFam" id="TF101077"/>
<dbReference type="Reactome" id="R-MMU-141444">
    <property type="pathway name" value="Amplification of signal from unattached kinetochores via a MAD2 inhibitory signal"/>
</dbReference>
<dbReference type="Reactome" id="R-MMU-2467813">
    <property type="pathway name" value="Separation of Sister Chromatids"/>
</dbReference>
<dbReference type="Reactome" id="R-MMU-2500257">
    <property type="pathway name" value="Resolution of Sister Chromatid Cohesion"/>
</dbReference>
<dbReference type="Reactome" id="R-MMU-4615885">
    <property type="pathway name" value="SUMOylation of DNA replication proteins"/>
</dbReference>
<dbReference type="Reactome" id="R-MMU-5663220">
    <property type="pathway name" value="RHO GTPases Activate Formins"/>
</dbReference>
<dbReference type="Reactome" id="R-MMU-68877">
    <property type="pathway name" value="Mitotic Prometaphase"/>
</dbReference>
<dbReference type="Reactome" id="R-MMU-9648025">
    <property type="pathway name" value="EML4 and NUDC in mitotic spindle formation"/>
</dbReference>
<dbReference type="BioGRID-ORCS" id="52276">
    <property type="hits" value="25 hits in 80 CRISPR screens"/>
</dbReference>
<dbReference type="PRO" id="PR:Q8BHX3"/>
<dbReference type="Proteomes" id="UP000000589">
    <property type="component" value="Chromosome 4"/>
</dbReference>
<dbReference type="RNAct" id="Q8BHX3">
    <property type="molecule type" value="protein"/>
</dbReference>
<dbReference type="Bgee" id="ENSMUSG00000028873">
    <property type="expression patterns" value="Expressed in metanephric renal vesicle and 196 other cell types or tissues"/>
</dbReference>
<dbReference type="ExpressionAtlas" id="Q8BHX3">
    <property type="expression patterns" value="baseline and differential"/>
</dbReference>
<dbReference type="GO" id="GO:0010369">
    <property type="term" value="C:chromocenter"/>
    <property type="evidence" value="ECO:0000314"/>
    <property type="project" value="MGI"/>
</dbReference>
<dbReference type="GO" id="GO:0032133">
    <property type="term" value="C:chromosome passenger complex"/>
    <property type="evidence" value="ECO:0000250"/>
    <property type="project" value="UniProtKB"/>
</dbReference>
<dbReference type="GO" id="GO:0000775">
    <property type="term" value="C:chromosome, centromeric region"/>
    <property type="evidence" value="ECO:0007669"/>
    <property type="project" value="UniProtKB-SubCell"/>
</dbReference>
<dbReference type="GO" id="GO:0005737">
    <property type="term" value="C:cytoplasm"/>
    <property type="evidence" value="ECO:0007669"/>
    <property type="project" value="UniProtKB-SubCell"/>
</dbReference>
<dbReference type="GO" id="GO:0045171">
    <property type="term" value="C:intercellular bridge"/>
    <property type="evidence" value="ECO:0007669"/>
    <property type="project" value="Ensembl"/>
</dbReference>
<dbReference type="GO" id="GO:0015630">
    <property type="term" value="C:microtubule cytoskeleton"/>
    <property type="evidence" value="ECO:0000266"/>
    <property type="project" value="ComplexPortal"/>
</dbReference>
<dbReference type="GO" id="GO:0030496">
    <property type="term" value="C:midbody"/>
    <property type="evidence" value="ECO:0007669"/>
    <property type="project" value="Ensembl"/>
</dbReference>
<dbReference type="GO" id="GO:0005730">
    <property type="term" value="C:nucleolus"/>
    <property type="evidence" value="ECO:0007669"/>
    <property type="project" value="UniProtKB-SubCell"/>
</dbReference>
<dbReference type="GO" id="GO:0005654">
    <property type="term" value="C:nucleoplasm"/>
    <property type="evidence" value="ECO:0007669"/>
    <property type="project" value="Ensembl"/>
</dbReference>
<dbReference type="GO" id="GO:0032991">
    <property type="term" value="C:protein-containing complex"/>
    <property type="evidence" value="ECO:0000250"/>
    <property type="project" value="UniProtKB"/>
</dbReference>
<dbReference type="GO" id="GO:0005819">
    <property type="term" value="C:spindle"/>
    <property type="evidence" value="ECO:0007669"/>
    <property type="project" value="UniProtKB-SubCell"/>
</dbReference>
<dbReference type="GO" id="GO:0000278">
    <property type="term" value="P:mitotic cell cycle"/>
    <property type="evidence" value="ECO:0000303"/>
    <property type="project" value="ComplexPortal"/>
</dbReference>
<dbReference type="GO" id="GO:0000281">
    <property type="term" value="P:mitotic cytokinesis"/>
    <property type="evidence" value="ECO:0000303"/>
    <property type="project" value="ComplexPortal"/>
</dbReference>
<dbReference type="GO" id="GO:0007080">
    <property type="term" value="P:mitotic metaphase chromosome alignment"/>
    <property type="evidence" value="ECO:0007669"/>
    <property type="project" value="Ensembl"/>
</dbReference>
<dbReference type="GO" id="GO:0051256">
    <property type="term" value="P:mitotic spindle midzone assembly"/>
    <property type="evidence" value="ECO:0000303"/>
    <property type="project" value="ComplexPortal"/>
</dbReference>
<dbReference type="GO" id="GO:0007052">
    <property type="term" value="P:mitotic spindle organization"/>
    <property type="evidence" value="ECO:0000303"/>
    <property type="project" value="ComplexPortal"/>
</dbReference>
<dbReference type="GO" id="GO:1902425">
    <property type="term" value="P:positive regulation of attachment of mitotic spindle microtubules to kinetochore"/>
    <property type="evidence" value="ECO:0000303"/>
    <property type="project" value="ComplexPortal"/>
</dbReference>
<dbReference type="GO" id="GO:0090267">
    <property type="term" value="P:positive regulation of mitotic cell cycle spindle assembly checkpoint"/>
    <property type="evidence" value="ECO:0000303"/>
    <property type="project" value="ComplexPortal"/>
</dbReference>
<dbReference type="GO" id="GO:1903490">
    <property type="term" value="P:positive regulation of mitotic cytokinesis"/>
    <property type="evidence" value="ECO:0000303"/>
    <property type="project" value="ComplexPortal"/>
</dbReference>
<dbReference type="GO" id="GO:1901970">
    <property type="term" value="P:positive regulation of mitotic sister chromatid separation"/>
    <property type="evidence" value="ECO:0000303"/>
    <property type="project" value="ComplexPortal"/>
</dbReference>
<dbReference type="Gene3D" id="6.10.140.560">
    <property type="match status" value="1"/>
</dbReference>
<dbReference type="Gene3D" id="6.10.250.1900">
    <property type="match status" value="1"/>
</dbReference>
<dbReference type="InterPro" id="IPR046466">
    <property type="entry name" value="Borealin_C"/>
</dbReference>
<dbReference type="InterPro" id="IPR018851">
    <property type="entry name" value="Borealin_N"/>
</dbReference>
<dbReference type="InterPro" id="IPR018867">
    <property type="entry name" value="Cell_div_borealin"/>
</dbReference>
<dbReference type="PANTHER" id="PTHR16040">
    <property type="entry name" value="AUSTRALIN, ISOFORM A-RELATED"/>
    <property type="match status" value="1"/>
</dbReference>
<dbReference type="PANTHER" id="PTHR16040:SF6">
    <property type="entry name" value="BOREALIN"/>
    <property type="match status" value="1"/>
</dbReference>
<dbReference type="Pfam" id="PF10512">
    <property type="entry name" value="Borealin"/>
    <property type="match status" value="1"/>
</dbReference>
<dbReference type="Pfam" id="PF10444">
    <property type="entry name" value="Nbl1_Borealin_N"/>
    <property type="match status" value="1"/>
</dbReference>
<name>BOREA_MOUSE</name>
<keyword id="KW-0025">Alternative splicing</keyword>
<keyword id="KW-0131">Cell cycle</keyword>
<keyword id="KW-0132">Cell division</keyword>
<keyword id="KW-0137">Centromere</keyword>
<keyword id="KW-0158">Chromosome</keyword>
<keyword id="KW-0164">Citrullination</keyword>
<keyword id="KW-0963">Cytoplasm</keyword>
<keyword id="KW-0206">Cytoskeleton</keyword>
<keyword id="KW-1017">Isopeptide bond</keyword>
<keyword id="KW-0498">Mitosis</keyword>
<keyword id="KW-0539">Nucleus</keyword>
<keyword id="KW-0597">Phosphoprotein</keyword>
<keyword id="KW-1185">Reference proteome</keyword>
<keyword id="KW-0832">Ubl conjugation</keyword>
<gene>
    <name type="primary">Cdca8</name>
</gene>
<comment type="function">
    <text evidence="2">Component of the chromosomal passenger complex (CPC), a complex that acts as a key regulator of mitosis. The CPC complex has essential functions at the centromere in ensuring correct chromosome alignment and segregation and is required for chromatin-induced microtubule stabilization and spindle assembly. In the complex, it may be required to direct the CPC to centromeric DNA. Major effector of the TTK kinase in the control of attachment-error-correction and chromosome alignment (By similarity).</text>
</comment>
<comment type="subunit">
    <text evidence="2">May form homooligomers and homodimers. Component of the chromosomal passenger complex (CPC) composed of at least BIRC5/survivin, CDCA8/borealin, INCENP, AURKB or AURKC; in the complex forms a triple-helix bundle-based subcomplex with INCENP and BIRC5 (By similarity). Interacts with SENP3, UBE2I and RANBP2. Interacts (phosphorylated) with SGO1 and SGO2A; the association is dependent on CDK1 (By similarity).</text>
</comment>
<comment type="subcellular location">
    <subcellularLocation>
        <location evidence="2">Nucleus</location>
        <location evidence="2">Nucleolus</location>
    </subcellularLocation>
    <subcellularLocation>
        <location evidence="2">Cytoplasm</location>
    </subcellularLocation>
    <subcellularLocation>
        <location evidence="2">Chromosome</location>
        <location evidence="2">Centromere</location>
    </subcellularLocation>
    <subcellularLocation>
        <location evidence="2">Cytoplasm</location>
        <location evidence="2">Cytoskeleton</location>
        <location evidence="2">Spindle</location>
    </subcellularLocation>
    <text evidence="2">Localizes on chromosome arms and inner centromeres from prophase through metaphase and then transferring to the spindle midzone and midbody from anaphase through cytokinesis. Colocalizes with SENP3 in the nucleolus in interphase cells.</text>
</comment>
<comment type="alternative products">
    <event type="alternative splicing"/>
    <isoform>
        <id>Q8BHX3-1</id>
        <name>1</name>
        <sequence type="displayed"/>
    </isoform>
    <isoform>
        <id>Q8BHX3-2</id>
        <name>2</name>
        <sequence type="described" ref="VSP_019924"/>
    </isoform>
    <isoform>
        <id>Q8BHX3-3</id>
        <name>3</name>
        <sequence type="described" ref="VSP_019922 VSP_019923"/>
    </isoform>
</comment>
<comment type="domain">
    <text evidence="1">The C-terminal region (aa 216-289) represents the dimerization motif.</text>
</comment>
<comment type="PTM">
    <text evidence="2">Phosphorylated by TTK, essentially at Thr-94. Phosphorylation (probably by CDK1) promotes targeting of the CPC to centromeric DNA.</text>
</comment>
<comment type="PTM">
    <text evidence="2">Sumoylated by UBE2I and RANBP2. Desumoylated by SENP3 through the removal of SUMO2 and SUMO3 (By similarity).</text>
</comment>
<comment type="PTM">
    <text evidence="4">Citrullinated by PADI4.</text>
</comment>
<comment type="similarity">
    <text evidence="7">Belongs to the borealin family.</text>
</comment>
<feature type="chain" id="PRO_0000247076" description="Borealin">
    <location>
        <begin position="1"/>
        <end position="289"/>
    </location>
</feature>
<feature type="region of interest" description="Required for interaction with SENP3" evidence="1">
    <location>
        <begin position="1"/>
        <end position="150"/>
    </location>
</feature>
<feature type="region of interest" description="Required for centromere localization" evidence="1">
    <location>
        <begin position="1"/>
        <end position="88"/>
    </location>
</feature>
<feature type="region of interest" description="Required for interaction with INCENP" evidence="1">
    <location>
        <begin position="1"/>
        <end position="58"/>
    </location>
</feature>
<feature type="region of interest" description="Required to form a minimal CPC core complex that localizes to the central spindle and midbody and properly executes the role of the CPC during cytokinesis" evidence="1">
    <location>
        <begin position="10"/>
        <end position="109"/>
    </location>
</feature>
<feature type="region of interest" description="Required for interaction with INCENP and BIRC5" evidence="1">
    <location>
        <begin position="20"/>
        <end position="78"/>
    </location>
</feature>
<feature type="region of interest" description="Disordered" evidence="3">
    <location>
        <begin position="122"/>
        <end position="173"/>
    </location>
</feature>
<feature type="compositionally biased region" description="Acidic residues" evidence="3">
    <location>
        <begin position="123"/>
        <end position="133"/>
    </location>
</feature>
<feature type="compositionally biased region" description="Basic residues" evidence="3">
    <location>
        <begin position="139"/>
        <end position="162"/>
    </location>
</feature>
<feature type="modified residue" description="Citrulline" evidence="4">
    <location>
        <position position="91"/>
    </location>
</feature>
<feature type="modified residue" description="Phosphothreonine; by TTK" evidence="2">
    <location>
        <position position="94"/>
    </location>
</feature>
<feature type="modified residue" description="Phosphothreonine" evidence="8">
    <location>
        <position position="106"/>
    </location>
</feature>
<feature type="modified residue" description="Phosphoserine" evidence="2">
    <location>
        <position position="110"/>
    </location>
</feature>
<feature type="modified residue" description="Phosphoserine" evidence="8">
    <location>
        <position position="175"/>
    </location>
</feature>
<feature type="modified residue" description="Phosphothreonine" evidence="2">
    <location>
        <position position="198"/>
    </location>
</feature>
<feature type="modified residue" description="Phosphothreonine" evidence="2">
    <location>
        <position position="213"/>
    </location>
</feature>
<feature type="modified residue" description="Phosphoserine" evidence="8">
    <location>
        <position position="228"/>
    </location>
</feature>
<feature type="modified residue" description="Phosphoserine" evidence="2">
    <location>
        <position position="233"/>
    </location>
</feature>
<feature type="modified residue" description="Phosphoserine" evidence="2">
    <location>
        <position position="247"/>
    </location>
</feature>
<feature type="modified residue" description="Phosphoserine" evidence="2">
    <location>
        <position position="253"/>
    </location>
</feature>
<feature type="cross-link" description="Glycyl lysine isopeptide (Lys-Gly) (interchain with G-Cter in SUMO2)" evidence="2">
    <location>
        <position position="145"/>
    </location>
</feature>
<feature type="splice variant" id="VSP_019922" description="In isoform 3." evidence="5">
    <original>EEEEGGGGGGRTKKSHKNLRSAKVKRCLPSKKRT</original>
    <variation>QKRAIRIFDLQKSKDAFHPRREPSPYKEEAEVKG</variation>
    <location>
        <begin position="129"/>
        <end position="162"/>
    </location>
</feature>
<feature type="splice variant" id="VSP_019923" description="In isoform 3." evidence="5">
    <location>
        <begin position="163"/>
        <end position="289"/>
    </location>
</feature>
<feature type="splice variant" id="VSP_019924" description="In isoform 2." evidence="6">
    <original>SRLAQICSSIRTGR</original>
    <variation>GRVILQHLCASLPRLRNESPLRSRLGKLERQEHLRLQRTQVWLSANMAVHL</variation>
    <location>
        <begin position="276"/>
        <end position="289"/>
    </location>
</feature>
<feature type="sequence conflict" description="In Ref. 2; BAB27258." evidence="7" ref="2">
    <original>L</original>
    <variation>P</variation>
    <location>
        <position position="25"/>
    </location>
</feature>
<feature type="sequence conflict" description="In Ref. 1; AAT34966 and 2; BAC36334." evidence="7" ref="1 2">
    <original>G</original>
    <variation>E</variation>
    <location>
        <position position="136"/>
    </location>
</feature>
<feature type="sequence conflict" description="In Ref. 2; BAC37258." evidence="7" ref="2">
    <original>K</original>
    <variation>E</variation>
    <location>
        <position position="153"/>
    </location>
</feature>
<organism>
    <name type="scientific">Mus musculus</name>
    <name type="common">Mouse</name>
    <dbReference type="NCBI Taxonomy" id="10090"/>
    <lineage>
        <taxon>Eukaryota</taxon>
        <taxon>Metazoa</taxon>
        <taxon>Chordata</taxon>
        <taxon>Craniata</taxon>
        <taxon>Vertebrata</taxon>
        <taxon>Euteleostomi</taxon>
        <taxon>Mammalia</taxon>
        <taxon>Eutheria</taxon>
        <taxon>Euarchontoglires</taxon>
        <taxon>Glires</taxon>
        <taxon>Rodentia</taxon>
        <taxon>Myomorpha</taxon>
        <taxon>Muroidea</taxon>
        <taxon>Muridae</taxon>
        <taxon>Murinae</taxon>
        <taxon>Mus</taxon>
        <taxon>Mus</taxon>
    </lineage>
</organism>
<accession>Q8BHX3</accession>
<accession>B1ARX0</accession>
<accession>B1ARX1</accession>
<accession>Q6NVD3</accession>
<accession>Q8BHB1</accession>
<accession>Q8BHQ5</accession>
<accession>Q8BHQ9</accession>
<accession>Q9CRN4</accession>
<accession>Q9CS02</accession>
<accession>Q9CTF4</accession>
<evidence type="ECO:0000250" key="1"/>
<evidence type="ECO:0000250" key="2">
    <source>
        <dbReference type="UniProtKB" id="Q53HL2"/>
    </source>
</evidence>
<evidence type="ECO:0000256" key="3">
    <source>
        <dbReference type="SAM" id="MobiDB-lite"/>
    </source>
</evidence>
<evidence type="ECO:0000269" key="4">
    <source>
    </source>
</evidence>
<evidence type="ECO:0000303" key="5">
    <source>
    </source>
</evidence>
<evidence type="ECO:0000303" key="6">
    <source>
    </source>
</evidence>
<evidence type="ECO:0000305" key="7"/>
<evidence type="ECO:0007744" key="8">
    <source>
    </source>
</evidence>